<accession>Q2GL43</accession>
<name>RL18_ANAPZ</name>
<gene>
    <name evidence="1" type="primary">rplR</name>
    <name type="ordered locus">APH_0296</name>
</gene>
<keyword id="KW-0687">Ribonucleoprotein</keyword>
<keyword id="KW-0689">Ribosomal protein</keyword>
<keyword id="KW-0694">RNA-binding</keyword>
<keyword id="KW-0699">rRNA-binding</keyword>
<sequence length="121" mass="13704">MSLFDLKRAERRRRRVRLKLRSLSSIRLSVFKSNRHFYAQLIDDEAGRTVAAASTLESEVLAVASRRVNAGAVKIVAKLLAERISGLDAAYRKFVFDRGSYRYMGVVAAFADELRSLGFEF</sequence>
<feature type="chain" id="PRO_0000251286" description="Large ribosomal subunit protein uL18">
    <location>
        <begin position="1"/>
        <end position="121"/>
    </location>
</feature>
<reference key="1">
    <citation type="journal article" date="2006" name="PLoS Genet.">
        <title>Comparative genomics of emerging human ehrlichiosis agents.</title>
        <authorList>
            <person name="Dunning Hotopp J.C."/>
            <person name="Lin M."/>
            <person name="Madupu R."/>
            <person name="Crabtree J."/>
            <person name="Angiuoli S.V."/>
            <person name="Eisen J.A."/>
            <person name="Seshadri R."/>
            <person name="Ren Q."/>
            <person name="Wu M."/>
            <person name="Utterback T.R."/>
            <person name="Smith S."/>
            <person name="Lewis M."/>
            <person name="Khouri H."/>
            <person name="Zhang C."/>
            <person name="Niu H."/>
            <person name="Lin Q."/>
            <person name="Ohashi N."/>
            <person name="Zhi N."/>
            <person name="Nelson W.C."/>
            <person name="Brinkac L.M."/>
            <person name="Dodson R.J."/>
            <person name="Rosovitz M.J."/>
            <person name="Sundaram J.P."/>
            <person name="Daugherty S.C."/>
            <person name="Davidsen T."/>
            <person name="Durkin A.S."/>
            <person name="Gwinn M.L."/>
            <person name="Haft D.H."/>
            <person name="Selengut J.D."/>
            <person name="Sullivan S.A."/>
            <person name="Zafar N."/>
            <person name="Zhou L."/>
            <person name="Benahmed F."/>
            <person name="Forberger H."/>
            <person name="Halpin R."/>
            <person name="Mulligan S."/>
            <person name="Robinson J."/>
            <person name="White O."/>
            <person name="Rikihisa Y."/>
            <person name="Tettelin H."/>
        </authorList>
    </citation>
    <scope>NUCLEOTIDE SEQUENCE [LARGE SCALE GENOMIC DNA]</scope>
    <source>
        <strain>HZ</strain>
    </source>
</reference>
<evidence type="ECO:0000255" key="1">
    <source>
        <dbReference type="HAMAP-Rule" id="MF_01337"/>
    </source>
</evidence>
<evidence type="ECO:0000305" key="2"/>
<organism>
    <name type="scientific">Anaplasma phagocytophilum (strain HZ)</name>
    <dbReference type="NCBI Taxonomy" id="212042"/>
    <lineage>
        <taxon>Bacteria</taxon>
        <taxon>Pseudomonadati</taxon>
        <taxon>Pseudomonadota</taxon>
        <taxon>Alphaproteobacteria</taxon>
        <taxon>Rickettsiales</taxon>
        <taxon>Anaplasmataceae</taxon>
        <taxon>Anaplasma</taxon>
        <taxon>phagocytophilum group</taxon>
    </lineage>
</organism>
<protein>
    <recommendedName>
        <fullName evidence="1">Large ribosomal subunit protein uL18</fullName>
    </recommendedName>
    <alternativeName>
        <fullName evidence="2">50S ribosomal protein L18</fullName>
    </alternativeName>
</protein>
<dbReference type="EMBL" id="CP000235">
    <property type="protein sequence ID" value="ABD43328.1"/>
    <property type="molecule type" value="Genomic_DNA"/>
</dbReference>
<dbReference type="RefSeq" id="WP_011450431.1">
    <property type="nucleotide sequence ID" value="NC_007797.1"/>
</dbReference>
<dbReference type="SMR" id="Q2GL43"/>
<dbReference type="STRING" id="212042.APH_0296"/>
<dbReference type="PaxDb" id="212042-APH_0296"/>
<dbReference type="EnsemblBacteria" id="ABD43328">
    <property type="protein sequence ID" value="ABD43328"/>
    <property type="gene ID" value="APH_0296"/>
</dbReference>
<dbReference type="GeneID" id="92747507"/>
<dbReference type="KEGG" id="aph:APH_0296"/>
<dbReference type="eggNOG" id="COG0256">
    <property type="taxonomic scope" value="Bacteria"/>
</dbReference>
<dbReference type="HOGENOM" id="CLU_098841_0_1_5"/>
<dbReference type="Proteomes" id="UP000001943">
    <property type="component" value="Chromosome"/>
</dbReference>
<dbReference type="GO" id="GO:0022625">
    <property type="term" value="C:cytosolic large ribosomal subunit"/>
    <property type="evidence" value="ECO:0007669"/>
    <property type="project" value="TreeGrafter"/>
</dbReference>
<dbReference type="GO" id="GO:0008097">
    <property type="term" value="F:5S rRNA binding"/>
    <property type="evidence" value="ECO:0007669"/>
    <property type="project" value="TreeGrafter"/>
</dbReference>
<dbReference type="GO" id="GO:0003735">
    <property type="term" value="F:structural constituent of ribosome"/>
    <property type="evidence" value="ECO:0007669"/>
    <property type="project" value="InterPro"/>
</dbReference>
<dbReference type="GO" id="GO:0006412">
    <property type="term" value="P:translation"/>
    <property type="evidence" value="ECO:0007669"/>
    <property type="project" value="UniProtKB-UniRule"/>
</dbReference>
<dbReference type="CDD" id="cd00432">
    <property type="entry name" value="Ribosomal_L18_L5e"/>
    <property type="match status" value="1"/>
</dbReference>
<dbReference type="Gene3D" id="3.30.420.100">
    <property type="match status" value="1"/>
</dbReference>
<dbReference type="HAMAP" id="MF_01337_B">
    <property type="entry name" value="Ribosomal_uL18_B"/>
    <property type="match status" value="1"/>
</dbReference>
<dbReference type="InterPro" id="IPR004389">
    <property type="entry name" value="Ribosomal_uL18_bac-type"/>
</dbReference>
<dbReference type="InterPro" id="IPR005484">
    <property type="entry name" value="Ribosomal_uL18_bac/euk"/>
</dbReference>
<dbReference type="NCBIfam" id="TIGR00060">
    <property type="entry name" value="L18_bact"/>
    <property type="match status" value="1"/>
</dbReference>
<dbReference type="PANTHER" id="PTHR12899">
    <property type="entry name" value="39S RIBOSOMAL PROTEIN L18, MITOCHONDRIAL"/>
    <property type="match status" value="1"/>
</dbReference>
<dbReference type="PANTHER" id="PTHR12899:SF3">
    <property type="entry name" value="LARGE RIBOSOMAL SUBUNIT PROTEIN UL18M"/>
    <property type="match status" value="1"/>
</dbReference>
<dbReference type="Pfam" id="PF00861">
    <property type="entry name" value="Ribosomal_L18p"/>
    <property type="match status" value="1"/>
</dbReference>
<dbReference type="SUPFAM" id="SSF53137">
    <property type="entry name" value="Translational machinery components"/>
    <property type="match status" value="1"/>
</dbReference>
<comment type="function">
    <text evidence="1">This is one of the proteins that bind and probably mediate the attachment of the 5S RNA into the large ribosomal subunit, where it forms part of the central protuberance.</text>
</comment>
<comment type="subunit">
    <text evidence="1">Part of the 50S ribosomal subunit; part of the 5S rRNA/L5/L18/L25 subcomplex. Contacts the 5S and 23S rRNAs.</text>
</comment>
<comment type="similarity">
    <text evidence="1">Belongs to the universal ribosomal protein uL18 family.</text>
</comment>
<proteinExistence type="inferred from homology"/>